<keyword id="KW-0002">3D-structure</keyword>
<keyword id="KW-0966">Cell projection</keyword>
<keyword id="KW-0969">Cilium</keyword>
<keyword id="KW-0175">Coiled coil</keyword>
<keyword id="KW-0963">Cytoplasm</keyword>
<keyword id="KW-0206">Cytoskeleton</keyword>
<keyword id="KW-0282">Flagellum</keyword>
<keyword id="KW-1185">Reference proteome</keyword>
<keyword id="KW-0677">Repeat</keyword>
<sequence length="733" mass="85454">MGKEKFHKSQHWGFCNNVRMLVGEDKPGIGGELLFGQKIKPKYSVFPKGMGTDSPSWVAFDKQVLSFDAYLEDEVPDKSQENYRIRRYKIYFYLEDDTVEVNEPVLQNSGLPQGIFIRRHRISLPPPNEDQFYTVHHFNVNTDIVFYGRTFKVYDCDAFTKNFLTKIGVKLNPPGQCPEDPYMKTRREKLDCMEPICPYESFDTLKQFLEYDRKVLRFFCVWDDSGSVFGDRRELILHYFLSDDTIEIKEVLPHNSGRDAMSLFLQRRKLPKYGPPGVYQPGQLTDQTVLNVYGGYSETRVYGFLLDKYQLGKLDQEFYKDTDLSIGTTINVWGRKVLLCDCDDFTKTYYRTKYGIENFTSIPCKAPSPPKIERKFPPYTGFGSEEDSLRSCIGLMPTPHQRNFKKFIEFDSYGNISNTLRFFAKLITHKCADVERMFVISYFLSDDTISVFEPIERNSGYTGGMFLKRVRVKKPGQEVFKSEFSEYIKAEELYVGAKVNVNGYLFFLVNADEYTLNYMERNSDKFPLSSIELVIQKLKEEECKSRELKQVFTAADCMHTKMVDFNTFREIMMNLTVGKLTDQEVITIARRYRVPEDPCPHRNVLVAQAHEQLKKNAFENFERLIAMCVYEDREKKKVLPSKDIKRLCKSSRLPLNEDLLGSLLSGFEDSEKQINYESFFCALNWRVNPVPVLEVASYIKERCEDEWLGMPSPIPVKYIYYLNLLKDVFGVDE</sequence>
<evidence type="ECO:0000255" key="1">
    <source>
        <dbReference type="PROSITE-ProRule" id="PRU00665"/>
    </source>
</evidence>
<evidence type="ECO:0000269" key="2">
    <source>
    </source>
</evidence>
<evidence type="ECO:0000269" key="3">
    <source>
    </source>
</evidence>
<evidence type="ECO:0000312" key="4">
    <source>
        <dbReference type="Proteomes" id="UP000009136"/>
    </source>
</evidence>
<evidence type="ECO:0007744" key="5">
    <source>
        <dbReference type="PDB" id="7RRO"/>
    </source>
</evidence>
<evidence type="ECO:0007744" key="6">
    <source>
        <dbReference type="PDB" id="8OTZ"/>
    </source>
</evidence>
<proteinExistence type="evidence at protein level"/>
<dbReference type="RefSeq" id="XP_002700247.1">
    <property type="nucleotide sequence ID" value="XM_002700201.3"/>
</dbReference>
<dbReference type="RefSeq" id="XP_015326002.1">
    <property type="nucleotide sequence ID" value="XM_015470516.1"/>
</dbReference>
<dbReference type="RefSeq" id="XP_059739787.1">
    <property type="nucleotide sequence ID" value="XM_059883804.1"/>
</dbReference>
<dbReference type="PDB" id="7RRO">
    <property type="method" value="EM"/>
    <property type="resolution" value="3.40 A"/>
    <property type="chains" value="W/X/Y/Z=1-733"/>
</dbReference>
<dbReference type="PDB" id="8OTZ">
    <property type="method" value="EM"/>
    <property type="resolution" value="3.60 A"/>
    <property type="chains" value="Aa/Ab/Ac/Ad=1-733"/>
</dbReference>
<dbReference type="PDB" id="9CPB">
    <property type="method" value="EM"/>
    <property type="resolution" value="3.52 A"/>
    <property type="chains" value="3N/3O/3P/3Q=1-733"/>
</dbReference>
<dbReference type="PDBsum" id="7RRO"/>
<dbReference type="PDBsum" id="8OTZ"/>
<dbReference type="PDBsum" id="9CPB"/>
<dbReference type="EMDB" id="EMD-17187"/>
<dbReference type="EMDB" id="EMD-24664"/>
<dbReference type="EMDB" id="EMD-45801"/>
<dbReference type="EMDB" id="EMD-50664"/>
<dbReference type="SMR" id="A0A3Q1N1R0"/>
<dbReference type="FunCoup" id="A0A3Q1N1R0">
    <property type="interactions" value="193"/>
</dbReference>
<dbReference type="STRING" id="9913.ENSBTAP00000063049"/>
<dbReference type="GeneID" id="100336399"/>
<dbReference type="KEGG" id="bta:100336399"/>
<dbReference type="CTD" id="80258"/>
<dbReference type="VEuPathDB" id="HostDB:ENSBTAG00000053072"/>
<dbReference type="InParanoid" id="A0A3Q1N1R0"/>
<dbReference type="OMA" id="RFSCKQP"/>
<dbReference type="OrthoDB" id="10255210at2759"/>
<dbReference type="Proteomes" id="UP000009136">
    <property type="component" value="Chromosome X"/>
</dbReference>
<dbReference type="Bgee" id="ENSBTAG00000053072">
    <property type="expression patterns" value="Expressed in oviduct epithelium and 53 other cell types or tissues"/>
</dbReference>
<dbReference type="GO" id="GO:0160111">
    <property type="term" value="C:axonemal A tubule inner sheath"/>
    <property type="evidence" value="ECO:0000250"/>
    <property type="project" value="UniProtKB"/>
</dbReference>
<dbReference type="GO" id="GO:0005879">
    <property type="term" value="C:axonemal microtubule"/>
    <property type="evidence" value="ECO:0000314"/>
    <property type="project" value="UniProtKB"/>
</dbReference>
<dbReference type="GO" id="GO:0036126">
    <property type="term" value="C:sperm flagellum"/>
    <property type="evidence" value="ECO:0000250"/>
    <property type="project" value="UniProtKB"/>
</dbReference>
<dbReference type="GO" id="GO:0030317">
    <property type="term" value="P:flagellated sperm motility"/>
    <property type="evidence" value="ECO:0000250"/>
    <property type="project" value="UniProtKB"/>
</dbReference>
<dbReference type="GO" id="GO:0010975">
    <property type="term" value="P:regulation of neuron projection development"/>
    <property type="evidence" value="ECO:0000318"/>
    <property type="project" value="GO_Central"/>
</dbReference>
<dbReference type="FunFam" id="2.30.29.170:FF:000002">
    <property type="entry name" value="EF-hand domain (C-terminal) containing 1"/>
    <property type="match status" value="1"/>
</dbReference>
<dbReference type="FunFam" id="2.30.29.170:FF:000003">
    <property type="entry name" value="EF-hand domain (C-terminal) containing 1"/>
    <property type="match status" value="1"/>
</dbReference>
<dbReference type="FunFam" id="2.30.29.170:FF:000001">
    <property type="entry name" value="EF-hand domain containing 1"/>
    <property type="match status" value="1"/>
</dbReference>
<dbReference type="FunFam" id="1.10.238.10:FF:000375">
    <property type="entry name" value="EF-hand domain-containing family member C2"/>
    <property type="match status" value="1"/>
</dbReference>
<dbReference type="Gene3D" id="2.30.29.170">
    <property type="match status" value="3"/>
</dbReference>
<dbReference type="InterPro" id="IPR006602">
    <property type="entry name" value="DM10_dom"/>
</dbReference>
<dbReference type="InterPro" id="IPR011992">
    <property type="entry name" value="EF-hand-dom_pair"/>
</dbReference>
<dbReference type="InterPro" id="IPR040193">
    <property type="entry name" value="EFHC1/EFHC2/EFHB"/>
</dbReference>
<dbReference type="PANTHER" id="PTHR12086">
    <property type="entry name" value="EF-HAND DOMAIN C-TERMINAL CONTAINING PROTEIN"/>
    <property type="match status" value="1"/>
</dbReference>
<dbReference type="PANTHER" id="PTHR12086:SF11">
    <property type="entry name" value="EF-HAND DOMAIN-CONTAINING FAMILY MEMBER C2"/>
    <property type="match status" value="1"/>
</dbReference>
<dbReference type="Pfam" id="PF06565">
    <property type="entry name" value="DM10_dom"/>
    <property type="match status" value="4"/>
</dbReference>
<dbReference type="SMART" id="SM00676">
    <property type="entry name" value="DM10"/>
    <property type="match status" value="3"/>
</dbReference>
<dbReference type="SUPFAM" id="SSF47473">
    <property type="entry name" value="EF-hand"/>
    <property type="match status" value="1"/>
</dbReference>
<dbReference type="PROSITE" id="PS51336">
    <property type="entry name" value="DM10"/>
    <property type="match status" value="3"/>
</dbReference>
<name>EFHC2_BOVIN</name>
<protein>
    <recommendedName>
        <fullName>EF-hand domain-containing family member C2</fullName>
    </recommendedName>
</protein>
<gene>
    <name type="primary">EFHC2</name>
</gene>
<accession>A0A3Q1N1R0</accession>
<organism evidence="4">
    <name type="scientific">Bos taurus</name>
    <name type="common">Bovine</name>
    <dbReference type="NCBI Taxonomy" id="9913"/>
    <lineage>
        <taxon>Eukaryota</taxon>
        <taxon>Metazoa</taxon>
        <taxon>Chordata</taxon>
        <taxon>Craniata</taxon>
        <taxon>Vertebrata</taxon>
        <taxon>Euteleostomi</taxon>
        <taxon>Mammalia</taxon>
        <taxon>Eutheria</taxon>
        <taxon>Laurasiatheria</taxon>
        <taxon>Artiodactyla</taxon>
        <taxon>Ruminantia</taxon>
        <taxon>Pecora</taxon>
        <taxon>Bovidae</taxon>
        <taxon>Bovinae</taxon>
        <taxon>Bos</taxon>
    </lineage>
</organism>
<comment type="function">
    <text evidence="2 3">Microtubule inner protein (MIP) part of the dynein-decorated doublet microtubules (DMTs) in cilia axoneme, which is required for motile cilia beating.</text>
</comment>
<comment type="subunit">
    <text evidence="3">Microtubule inner protein component of sperm flagellar doublet microtubules.</text>
</comment>
<comment type="subcellular location">
    <subcellularLocation>
        <location evidence="2">Cytoplasm</location>
        <location evidence="2">Cytoskeleton</location>
        <location evidence="2">Cilium axoneme</location>
    </subcellularLocation>
    <subcellularLocation>
        <location evidence="3">Cytoplasm</location>
        <location evidence="3">Cytoskeleton</location>
        <location evidence="3">Flagellum axoneme</location>
    </subcellularLocation>
</comment>
<comment type="tissue specificity">
    <text evidence="2">Expressed in trachea multiciliated cells.</text>
</comment>
<feature type="chain" id="PRO_0000456160" description="EF-hand domain-containing family member C2">
    <location>
        <begin position="1"/>
        <end position="733"/>
    </location>
</feature>
<feature type="domain" description="DM10 1" evidence="1">
    <location>
        <begin position="61"/>
        <end position="168"/>
    </location>
</feature>
<feature type="domain" description="DM10 2" evidence="1">
    <location>
        <begin position="212"/>
        <end position="354"/>
    </location>
</feature>
<feature type="domain" description="DM10 3" evidence="1">
    <location>
        <begin position="416"/>
        <end position="523"/>
    </location>
</feature>
<reference key="1">
    <citation type="journal article" date="2009" name="Genome Biol.">
        <title>A whole-genome assembly of the domestic cow, Bos taurus.</title>
        <authorList>
            <person name="Zimin A.V."/>
            <person name="Delcher A.L."/>
            <person name="Florea L."/>
            <person name="Kelley D.R."/>
            <person name="Schatz M.C."/>
            <person name="Puiu D."/>
            <person name="Hanrahan F."/>
            <person name="Pertea G."/>
            <person name="Van Tassell C.P."/>
            <person name="Sonstegard T.S."/>
            <person name="Marcais G."/>
            <person name="Roberts M."/>
            <person name="Subramanian P."/>
            <person name="Yorke J.A."/>
            <person name="Salzberg S.L."/>
        </authorList>
    </citation>
    <scope>NUCLEOTIDE SEQUENCE [LARGE SCALE GENOMIC DNA]</scope>
    <source>
        <strain>Hereford</strain>
    </source>
</reference>
<reference evidence="5" key="2">
    <citation type="journal article" date="2021" name="Cell">
        <title>De novo identification of mammalian ciliary motility proteins using cryo-EM.</title>
        <authorList>
            <person name="Gui M."/>
            <person name="Farley H."/>
            <person name="Anujan P."/>
            <person name="Anderson J.R."/>
            <person name="Maxwell D.W."/>
            <person name="Whitchurch J.B."/>
            <person name="Botsch J.J."/>
            <person name="Qiu T."/>
            <person name="Meleppattu S."/>
            <person name="Singh S.K."/>
            <person name="Zhang Q."/>
            <person name="Thompson J."/>
            <person name="Lucas J.S."/>
            <person name="Bingle C.D."/>
            <person name="Norris D.P."/>
            <person name="Roy S."/>
            <person name="Brown A."/>
        </authorList>
    </citation>
    <scope>STRUCTURE BY ELECTRON MICROSCOPY (3.40 ANGSTROMS)</scope>
    <scope>FUNCTION</scope>
    <scope>SUBCELLULAR LOCATION</scope>
    <scope>TISSUE SPECIFICITY</scope>
</reference>
<reference evidence="6" key="3">
    <citation type="journal article" date="2023" name="Cell">
        <title>Structural specializations of the sperm tail.</title>
        <authorList>
            <person name="Leung M.R."/>
            <person name="Zeng J."/>
            <person name="Wang X."/>
            <person name="Roelofs M.C."/>
            <person name="Huang W."/>
            <person name="Zenezini Chiozzi R."/>
            <person name="Hevler J.F."/>
            <person name="Heck A.J.R."/>
            <person name="Dutcher S.K."/>
            <person name="Brown A."/>
            <person name="Zhang R."/>
            <person name="Zeev-Ben-Mordehai T."/>
        </authorList>
    </citation>
    <scope>STRUCTURE BY ELECTRON MICROSCOPY (3.60 ANGSTROMS)</scope>
    <scope>FUNCTION</scope>
    <scope>SUBUNIT</scope>
    <scope>SUBCELLULAR LOCATION</scope>
</reference>